<protein>
    <recommendedName>
        <fullName evidence="3">Cystathionine gamma-synthase-like enzyme iboG1</fullName>
        <ecNumber evidence="5">4.4.-.-</ecNumber>
    </recommendedName>
    <alternativeName>
        <fullName evidence="3">Ibotenic acid biosynthesis cluster protein G1</fullName>
    </alternativeName>
</protein>
<sequence>MAIYQVIPYGLPVPPNTPHAILVSLPTWNDTVTCIEGEDAETRLSGYPRFFIQVAIRKLASLMERKYGLDGERCMLFPSYRVAEQCRLFVQASFSGVRVVSLLVCQEDNKNARIVECKEDTGLSMQPASENHLHIVLFPTDALPVAKLFWQFTGTGISSRFADHWLSTLPDDVVRTNGISGSTSVQYLTNKSPGDYSVGLELTPLPDAASAKYVLRQRIAGALNVYDRQGGPYAVQENLQVGPNSHGIADVSENDVYLFPTGMCAIWNAHRLSLAVRSAEKSVCFGFVYCDTLKVLEKWGPGCHFFPEGNDYDIDQLEVILEQESARDSTKPPILALYTEFPSNPLLRSPNLPRLRALADKYDFLMVIDDTLGNFVNVDVLPYADIVVTSLSKIFSGSANVMGGSLVLNTNGHHYTALAAYMTAHYEDTYYDEDAICMEQNSRDLQQRIKIIDTNAEALCDFLRSHSVAAGAAKSVIKEVFYPKYKTPENYERCRKTVSNHNASLSSSNEVGGYGGLFSITFISNAASRAFYESLDCFRAPSLGTNFTLAVLYTILAHHDELEWAAQCGVEEGLVRVSVGMENTETLLKVFEVALSTAKKAVATA</sequence>
<name>IBOG1_AMAMK</name>
<proteinExistence type="evidence at transcript level"/>
<feature type="chain" id="PRO_0000454918" description="Cystathionine gamma-synthase-like enzyme iboG1">
    <location>
        <begin position="1"/>
        <end position="605"/>
    </location>
</feature>
<feature type="binding site" evidence="1">
    <location>
        <position position="289"/>
    </location>
    <ligand>
        <name>substrate</name>
    </ligand>
</feature>
<feature type="modified residue" description="N6-(pyridoxal phosphate)lysine" evidence="1">
    <location>
        <position position="393"/>
    </location>
</feature>
<accession>A0A0C2WKN7</accession>
<dbReference type="EC" id="4.4.-.-" evidence="5"/>
<dbReference type="EMBL" id="KN818402">
    <property type="protein sequence ID" value="KIL56738.1"/>
    <property type="molecule type" value="Genomic_DNA"/>
</dbReference>
<dbReference type="SMR" id="A0A0C2WKN7"/>
<dbReference type="FunCoup" id="A0A0C2WKN7">
    <property type="interactions" value="120"/>
</dbReference>
<dbReference type="STRING" id="946122.A0A0C2WKN7"/>
<dbReference type="HOGENOM" id="CLU_011302_1_0_1"/>
<dbReference type="InParanoid" id="A0A0C2WKN7"/>
<dbReference type="OrthoDB" id="10047078at2759"/>
<dbReference type="BioCyc" id="MetaCyc:MONOMER-21262"/>
<dbReference type="Proteomes" id="UP000054549">
    <property type="component" value="Unassembled WGS sequence"/>
</dbReference>
<dbReference type="GO" id="GO:0003962">
    <property type="term" value="F:cystathionine gamma-synthase activity"/>
    <property type="evidence" value="ECO:0007669"/>
    <property type="project" value="TreeGrafter"/>
</dbReference>
<dbReference type="GO" id="GO:0016829">
    <property type="term" value="F:lyase activity"/>
    <property type="evidence" value="ECO:0007669"/>
    <property type="project" value="UniProtKB-KW"/>
</dbReference>
<dbReference type="GO" id="GO:0030170">
    <property type="term" value="F:pyridoxal phosphate binding"/>
    <property type="evidence" value="ECO:0007669"/>
    <property type="project" value="InterPro"/>
</dbReference>
<dbReference type="GO" id="GO:0019346">
    <property type="term" value="P:transsulfuration"/>
    <property type="evidence" value="ECO:0007669"/>
    <property type="project" value="InterPro"/>
</dbReference>
<dbReference type="Gene3D" id="3.90.1150.10">
    <property type="entry name" value="Aspartate Aminotransferase, domain 1"/>
    <property type="match status" value="1"/>
</dbReference>
<dbReference type="Gene3D" id="3.40.640.10">
    <property type="entry name" value="Type I PLP-dependent aspartate aminotransferase-like (Major domain)"/>
    <property type="match status" value="1"/>
</dbReference>
<dbReference type="InterPro" id="IPR000277">
    <property type="entry name" value="Cys/Met-Metab_PyrdxlP-dep_enz"/>
</dbReference>
<dbReference type="InterPro" id="IPR015424">
    <property type="entry name" value="PyrdxlP-dep_Trfase"/>
</dbReference>
<dbReference type="InterPro" id="IPR015421">
    <property type="entry name" value="PyrdxlP-dep_Trfase_major"/>
</dbReference>
<dbReference type="InterPro" id="IPR015422">
    <property type="entry name" value="PyrdxlP-dep_Trfase_small"/>
</dbReference>
<dbReference type="InterPro" id="IPR051750">
    <property type="entry name" value="Trans-sulfuration_enzymes"/>
</dbReference>
<dbReference type="PANTHER" id="PTHR42699">
    <property type="match status" value="1"/>
</dbReference>
<dbReference type="PANTHER" id="PTHR42699:SF1">
    <property type="entry name" value="CYSTATHIONINE GAMMA-SYNTHASE-RELATED"/>
    <property type="match status" value="1"/>
</dbReference>
<dbReference type="Pfam" id="PF01053">
    <property type="entry name" value="Cys_Met_Meta_PP"/>
    <property type="match status" value="1"/>
</dbReference>
<dbReference type="SUPFAM" id="SSF53383">
    <property type="entry name" value="PLP-dependent transferases"/>
    <property type="match status" value="1"/>
</dbReference>
<reference key="1">
    <citation type="journal article" date="2015" name="Nat. Genet.">
        <title>Convergent losses of decay mechanisms and rapid turnover of symbiosis genes in mycorrhizal mutualists.</title>
        <authorList>
            <consortium name="Mycorrhizal Genomics Initiative Consortium"/>
            <person name="Kohler A."/>
            <person name="Kuo A."/>
            <person name="Nagy L.G."/>
            <person name="Morin E."/>
            <person name="Barry K.W."/>
            <person name="Buscot F."/>
            <person name="Canbaeck B."/>
            <person name="Choi C."/>
            <person name="Cichocki N."/>
            <person name="Clum A."/>
            <person name="Colpaert J."/>
            <person name="Copeland A."/>
            <person name="Costa M.D."/>
            <person name="Dore J."/>
            <person name="Floudas D."/>
            <person name="Gay G."/>
            <person name="Girlanda M."/>
            <person name="Henrissat B."/>
            <person name="Herrmann S."/>
            <person name="Hess J."/>
            <person name="Hoegberg N."/>
            <person name="Johansson T."/>
            <person name="Khouja H.R."/>
            <person name="LaButti K."/>
            <person name="Lahrmann U."/>
            <person name="Levasseur A."/>
            <person name="Lindquist E.A."/>
            <person name="Lipzen A."/>
            <person name="Marmeisse R."/>
            <person name="Martino E."/>
            <person name="Murat C."/>
            <person name="Ngan C.Y."/>
            <person name="Nehls U."/>
            <person name="Plett J.M."/>
            <person name="Pringle A."/>
            <person name="Ohm R.A."/>
            <person name="Perotto S."/>
            <person name="Peter M."/>
            <person name="Riley R."/>
            <person name="Rineau F."/>
            <person name="Ruytinx J."/>
            <person name="Salamov A."/>
            <person name="Shah F."/>
            <person name="Sun H."/>
            <person name="Tarkka M."/>
            <person name="Tritt A."/>
            <person name="Veneault-Fourrey C."/>
            <person name="Zuccaro A."/>
            <person name="Tunlid A."/>
            <person name="Grigoriev I.V."/>
            <person name="Hibbett D.S."/>
            <person name="Martin F."/>
        </authorList>
    </citation>
    <scope>NUCLEOTIDE SEQUENCE [LARGE SCALE GENOMIC DNA]</scope>
    <source>
        <strain>Koide BX008</strain>
    </source>
</reference>
<reference key="2">
    <citation type="journal article" date="2020" name="Angew. Chem. Int. Ed.">
        <title>Ibotenic acid biosynthesis in the fly agaric is initiated by glutamate hydroxylation.</title>
        <authorList>
            <person name="Obermaier S."/>
            <person name="Mueller M."/>
        </authorList>
    </citation>
    <scope>FUNCTION</scope>
    <scope>INDUCTION</scope>
    <scope>PATHWAY</scope>
</reference>
<gene>
    <name type="primary">iboG1</name>
    <name type="ORF">M378DRAFT_28230</name>
</gene>
<keyword id="KW-0456">Lyase</keyword>
<keyword id="KW-0663">Pyridoxal phosphate</keyword>
<keyword id="KW-1185">Reference proteome</keyword>
<evidence type="ECO:0000250" key="1">
    <source>
        <dbReference type="UniProtKB" id="P32929"/>
    </source>
</evidence>
<evidence type="ECO:0000269" key="2">
    <source>
    </source>
</evidence>
<evidence type="ECO:0000303" key="3">
    <source>
    </source>
</evidence>
<evidence type="ECO:0000305" key="4"/>
<evidence type="ECO:0000305" key="5">
    <source>
    </source>
</evidence>
<organism>
    <name type="scientific">Amanita muscaria (strain Koide BX008)</name>
    <dbReference type="NCBI Taxonomy" id="946122"/>
    <lineage>
        <taxon>Eukaryota</taxon>
        <taxon>Fungi</taxon>
        <taxon>Dikarya</taxon>
        <taxon>Basidiomycota</taxon>
        <taxon>Agaricomycotina</taxon>
        <taxon>Agaricomycetes</taxon>
        <taxon>Agaricomycetidae</taxon>
        <taxon>Agaricales</taxon>
        <taxon>Pluteineae</taxon>
        <taxon>Amanitaceae</taxon>
        <taxon>Amanita</taxon>
    </lineage>
</organism>
<comment type="function">
    <text evidence="2 5">Cystathionine gamma-synthase-like enzyme; part of the gene cluster that mediates the biosynthesis of the psychoactive metabolites ibotenic acid and muscimol (PubMed:32233056). The first committed step is glutamate hydroxylation by the 2-oxoglutarate-dependent dioxygenase iboH, and the last step is decarboxylation of ibotenic acid to muscimol by the decarboxylase iboD (PubMed:32233056). The order of the intermediate reactions is somewhat ambiguous (Probable). IboA likely activates the carboxylic acid at position 5 to introduce an amide bond, and the flavin monooxygenase iboF generates the N-O bond (Probable). There are several options for the latter step (Probable). One option is that iboF directly hydroxylates the amide nitrogen formed by iboA to produce a hydroxamic acid species (Probable). Another option is that iboF hydroxylates an external N-containing compound, whose resulting N-O bond is subsequently introduced into the hydroxyglutamate scaffold (Probable). The paralogous PLP-dependent cystathionine gamma-synthase-like enzymes iboG1 and iboG2 are likely involved in substitution of the OH group at position 3 by the O-N moiety (Probable). The first cyclic intermediate is most probably tricholomic acid which is likely desaturated to ibotenic acid by the cytochrome P450 monooxygenase iboC (Probable).</text>
</comment>
<comment type="cofactor">
    <cofactor evidence="1">
        <name>pyridoxal 5'-phosphate</name>
        <dbReference type="ChEBI" id="CHEBI:597326"/>
    </cofactor>
</comment>
<comment type="pathway">
    <text evidence="5">Secondary metabolite biosynthesis.</text>
</comment>
<comment type="induction">
    <text evidence="2">Expression is highly induced during artificial growth in symbiosis with Populus, which is close to its natural condition.</text>
</comment>
<comment type="similarity">
    <text evidence="4">Belongs to the trans-sulfuration enzymes family.</text>
</comment>